<proteinExistence type="inferred from homology"/>
<protein>
    <recommendedName>
        <fullName evidence="1">Large ribosomal subunit protein uL1</fullName>
    </recommendedName>
    <alternativeName>
        <fullName evidence="2">50S ribosomal protein L1</fullName>
    </alternativeName>
</protein>
<gene>
    <name evidence="1" type="primary">rplA</name>
    <name type="ordered locus">BH06070</name>
</gene>
<reference key="1">
    <citation type="journal article" date="2004" name="Proc. Natl. Acad. Sci. U.S.A.">
        <title>The louse-borne human pathogen Bartonella quintana is a genomic derivative of the zoonotic agent Bartonella henselae.</title>
        <authorList>
            <person name="Alsmark U.C.M."/>
            <person name="Frank A.C."/>
            <person name="Karlberg E.O."/>
            <person name="Legault B.-A."/>
            <person name="Ardell D.H."/>
            <person name="Canbaeck B."/>
            <person name="Eriksson A.-S."/>
            <person name="Naeslund A.K."/>
            <person name="Handley S.A."/>
            <person name="Huvet M."/>
            <person name="La Scola B."/>
            <person name="Holmberg M."/>
            <person name="Andersson S.G.E."/>
        </authorList>
    </citation>
    <scope>NUCLEOTIDE SEQUENCE [LARGE SCALE GENOMIC DNA]</scope>
    <source>
        <strain>ATCC 49882 / DSM 28221 / CCUG 30454 / Houston 1</strain>
    </source>
</reference>
<keyword id="KW-0678">Repressor</keyword>
<keyword id="KW-0687">Ribonucleoprotein</keyword>
<keyword id="KW-0689">Ribosomal protein</keyword>
<keyword id="KW-0694">RNA-binding</keyword>
<keyword id="KW-0699">rRNA-binding</keyword>
<keyword id="KW-0810">Translation regulation</keyword>
<keyword id="KW-0820">tRNA-binding</keyword>
<comment type="function">
    <text evidence="1">Binds directly to 23S rRNA. The L1 stalk is quite mobile in the ribosome, and is involved in E site tRNA release.</text>
</comment>
<comment type="function">
    <text evidence="1">Protein L1 is also a translational repressor protein, it controls the translation of the L11 operon by binding to its mRNA.</text>
</comment>
<comment type="subunit">
    <text evidence="1">Part of the 50S ribosomal subunit.</text>
</comment>
<comment type="similarity">
    <text evidence="1">Belongs to the universal ribosomal protein uL1 family.</text>
</comment>
<sequence>MGKVAKRIKNIRKDINFNELYALKDAVSMVKERAIAKFDETIEISMNLGVDPRHADQMVRGVVHLPNGTGRNVRVAVFARGDKAEEAKTAGADIVGAEDLFESINGGAIDFDRCIATPDMMPLVGRLGKILGPRNLMPNPKVGTVTLDVANAVKASKGGAVEFRVEKAGIVHAGIGKASFGVEKIVENIKAFASAVIKAKPQGAKGEYIKRVAVSSTMGVGIKVDPATVRSE</sequence>
<name>RL1_BARHE</name>
<dbReference type="EMBL" id="BX897699">
    <property type="protein sequence ID" value="CAF27411.1"/>
    <property type="molecule type" value="Genomic_DNA"/>
</dbReference>
<dbReference type="RefSeq" id="WP_011180531.1">
    <property type="nucleotide sequence ID" value="NZ_LRIJ02000001.1"/>
</dbReference>
<dbReference type="SMR" id="Q6G3X8"/>
<dbReference type="PaxDb" id="283166-BH06070"/>
<dbReference type="EnsemblBacteria" id="CAF27411">
    <property type="protein sequence ID" value="CAF27411"/>
    <property type="gene ID" value="BH06070"/>
</dbReference>
<dbReference type="GeneID" id="92985667"/>
<dbReference type="KEGG" id="bhe:BH06070"/>
<dbReference type="eggNOG" id="COG0081">
    <property type="taxonomic scope" value="Bacteria"/>
</dbReference>
<dbReference type="OrthoDB" id="9803740at2"/>
<dbReference type="Proteomes" id="UP000000421">
    <property type="component" value="Chromosome"/>
</dbReference>
<dbReference type="GO" id="GO:0022625">
    <property type="term" value="C:cytosolic large ribosomal subunit"/>
    <property type="evidence" value="ECO:0007669"/>
    <property type="project" value="TreeGrafter"/>
</dbReference>
<dbReference type="GO" id="GO:0019843">
    <property type="term" value="F:rRNA binding"/>
    <property type="evidence" value="ECO:0007669"/>
    <property type="project" value="UniProtKB-UniRule"/>
</dbReference>
<dbReference type="GO" id="GO:0003735">
    <property type="term" value="F:structural constituent of ribosome"/>
    <property type="evidence" value="ECO:0007669"/>
    <property type="project" value="InterPro"/>
</dbReference>
<dbReference type="GO" id="GO:0000049">
    <property type="term" value="F:tRNA binding"/>
    <property type="evidence" value="ECO:0007669"/>
    <property type="project" value="UniProtKB-KW"/>
</dbReference>
<dbReference type="GO" id="GO:0006417">
    <property type="term" value="P:regulation of translation"/>
    <property type="evidence" value="ECO:0007669"/>
    <property type="project" value="UniProtKB-KW"/>
</dbReference>
<dbReference type="GO" id="GO:0006412">
    <property type="term" value="P:translation"/>
    <property type="evidence" value="ECO:0007669"/>
    <property type="project" value="UniProtKB-UniRule"/>
</dbReference>
<dbReference type="CDD" id="cd00403">
    <property type="entry name" value="Ribosomal_L1"/>
    <property type="match status" value="1"/>
</dbReference>
<dbReference type="FunFam" id="3.40.50.790:FF:000001">
    <property type="entry name" value="50S ribosomal protein L1"/>
    <property type="match status" value="1"/>
</dbReference>
<dbReference type="Gene3D" id="3.30.190.20">
    <property type="match status" value="1"/>
</dbReference>
<dbReference type="Gene3D" id="3.40.50.790">
    <property type="match status" value="1"/>
</dbReference>
<dbReference type="HAMAP" id="MF_01318_B">
    <property type="entry name" value="Ribosomal_uL1_B"/>
    <property type="match status" value="1"/>
</dbReference>
<dbReference type="InterPro" id="IPR005878">
    <property type="entry name" value="Ribosom_uL1_bac-type"/>
</dbReference>
<dbReference type="InterPro" id="IPR002143">
    <property type="entry name" value="Ribosomal_uL1"/>
</dbReference>
<dbReference type="InterPro" id="IPR023674">
    <property type="entry name" value="Ribosomal_uL1-like"/>
</dbReference>
<dbReference type="InterPro" id="IPR028364">
    <property type="entry name" value="Ribosomal_uL1/biogenesis"/>
</dbReference>
<dbReference type="InterPro" id="IPR016095">
    <property type="entry name" value="Ribosomal_uL1_3-a/b-sand"/>
</dbReference>
<dbReference type="InterPro" id="IPR023673">
    <property type="entry name" value="Ribosomal_uL1_CS"/>
</dbReference>
<dbReference type="NCBIfam" id="TIGR01169">
    <property type="entry name" value="rplA_bact"/>
    <property type="match status" value="1"/>
</dbReference>
<dbReference type="PANTHER" id="PTHR36427">
    <property type="entry name" value="54S RIBOSOMAL PROTEIN L1, MITOCHONDRIAL"/>
    <property type="match status" value="1"/>
</dbReference>
<dbReference type="PANTHER" id="PTHR36427:SF3">
    <property type="entry name" value="LARGE RIBOSOMAL SUBUNIT PROTEIN UL1M"/>
    <property type="match status" value="1"/>
</dbReference>
<dbReference type="Pfam" id="PF00687">
    <property type="entry name" value="Ribosomal_L1"/>
    <property type="match status" value="1"/>
</dbReference>
<dbReference type="PIRSF" id="PIRSF002155">
    <property type="entry name" value="Ribosomal_L1"/>
    <property type="match status" value="1"/>
</dbReference>
<dbReference type="SUPFAM" id="SSF56808">
    <property type="entry name" value="Ribosomal protein L1"/>
    <property type="match status" value="1"/>
</dbReference>
<dbReference type="PROSITE" id="PS01199">
    <property type="entry name" value="RIBOSOMAL_L1"/>
    <property type="match status" value="1"/>
</dbReference>
<feature type="chain" id="PRO_0000125618" description="Large ribosomal subunit protein uL1">
    <location>
        <begin position="1"/>
        <end position="232"/>
    </location>
</feature>
<evidence type="ECO:0000255" key="1">
    <source>
        <dbReference type="HAMAP-Rule" id="MF_01318"/>
    </source>
</evidence>
<evidence type="ECO:0000305" key="2"/>
<accession>Q6G3X8</accession>
<organism>
    <name type="scientific">Bartonella henselae (strain ATCC 49882 / DSM 28221 / CCUG 30454 / Houston 1)</name>
    <name type="common">Rochalimaea henselae</name>
    <dbReference type="NCBI Taxonomy" id="283166"/>
    <lineage>
        <taxon>Bacteria</taxon>
        <taxon>Pseudomonadati</taxon>
        <taxon>Pseudomonadota</taxon>
        <taxon>Alphaproteobacteria</taxon>
        <taxon>Hyphomicrobiales</taxon>
        <taxon>Bartonellaceae</taxon>
        <taxon>Bartonella</taxon>
    </lineage>
</organism>